<proteinExistence type="inferred from homology"/>
<dbReference type="EMBL" id="AF217820">
    <property type="protein sequence ID" value="AAF37239.1"/>
    <property type="molecule type" value="Genomic_DNA"/>
</dbReference>
<dbReference type="SMR" id="Q9MLK8"/>
<dbReference type="GO" id="GO:0005743">
    <property type="term" value="C:mitochondrial inner membrane"/>
    <property type="evidence" value="ECO:0007669"/>
    <property type="project" value="UniProtKB-SubCell"/>
</dbReference>
<dbReference type="GO" id="GO:0045275">
    <property type="term" value="C:respiratory chain complex III"/>
    <property type="evidence" value="ECO:0007669"/>
    <property type="project" value="InterPro"/>
</dbReference>
<dbReference type="GO" id="GO:0046872">
    <property type="term" value="F:metal ion binding"/>
    <property type="evidence" value="ECO:0007669"/>
    <property type="project" value="UniProtKB-KW"/>
</dbReference>
<dbReference type="GO" id="GO:0008121">
    <property type="term" value="F:ubiquinol-cytochrome-c reductase activity"/>
    <property type="evidence" value="ECO:0007669"/>
    <property type="project" value="InterPro"/>
</dbReference>
<dbReference type="GO" id="GO:0006122">
    <property type="term" value="P:mitochondrial electron transport, ubiquinol to cytochrome c"/>
    <property type="evidence" value="ECO:0007669"/>
    <property type="project" value="TreeGrafter"/>
</dbReference>
<dbReference type="CDD" id="cd00290">
    <property type="entry name" value="cytochrome_b_C"/>
    <property type="match status" value="1"/>
</dbReference>
<dbReference type="CDD" id="cd00284">
    <property type="entry name" value="Cytochrome_b_N"/>
    <property type="match status" value="1"/>
</dbReference>
<dbReference type="Gene3D" id="1.20.810.10">
    <property type="entry name" value="Cytochrome Bc1 Complex, Chain C"/>
    <property type="match status" value="1"/>
</dbReference>
<dbReference type="InterPro" id="IPR005798">
    <property type="entry name" value="Cyt_b/b6_C"/>
</dbReference>
<dbReference type="InterPro" id="IPR036150">
    <property type="entry name" value="Cyt_b/b6_C_sf"/>
</dbReference>
<dbReference type="InterPro" id="IPR005797">
    <property type="entry name" value="Cyt_b/b6_N"/>
</dbReference>
<dbReference type="InterPro" id="IPR027387">
    <property type="entry name" value="Cytb/b6-like_sf"/>
</dbReference>
<dbReference type="InterPro" id="IPR030689">
    <property type="entry name" value="Cytochrome_b"/>
</dbReference>
<dbReference type="InterPro" id="IPR048260">
    <property type="entry name" value="Cytochrome_b_C_euk/bac"/>
</dbReference>
<dbReference type="InterPro" id="IPR048259">
    <property type="entry name" value="Cytochrome_b_N_euk/bac"/>
</dbReference>
<dbReference type="InterPro" id="IPR016174">
    <property type="entry name" value="Di-haem_cyt_TM"/>
</dbReference>
<dbReference type="PANTHER" id="PTHR19271">
    <property type="entry name" value="CYTOCHROME B"/>
    <property type="match status" value="1"/>
</dbReference>
<dbReference type="PANTHER" id="PTHR19271:SF16">
    <property type="entry name" value="CYTOCHROME B"/>
    <property type="match status" value="1"/>
</dbReference>
<dbReference type="Pfam" id="PF00032">
    <property type="entry name" value="Cytochrom_B_C"/>
    <property type="match status" value="1"/>
</dbReference>
<dbReference type="Pfam" id="PF00033">
    <property type="entry name" value="Cytochrome_B"/>
    <property type="match status" value="1"/>
</dbReference>
<dbReference type="PIRSF" id="PIRSF038885">
    <property type="entry name" value="COB"/>
    <property type="match status" value="1"/>
</dbReference>
<dbReference type="SUPFAM" id="SSF81648">
    <property type="entry name" value="a domain/subunit of cytochrome bc1 complex (Ubiquinol-cytochrome c reductase)"/>
    <property type="match status" value="1"/>
</dbReference>
<dbReference type="SUPFAM" id="SSF81342">
    <property type="entry name" value="Transmembrane di-heme cytochromes"/>
    <property type="match status" value="1"/>
</dbReference>
<dbReference type="PROSITE" id="PS51003">
    <property type="entry name" value="CYTB_CTER"/>
    <property type="match status" value="1"/>
</dbReference>
<dbReference type="PROSITE" id="PS51002">
    <property type="entry name" value="CYTB_NTER"/>
    <property type="match status" value="1"/>
</dbReference>
<organism>
    <name type="scientific">Elapsoidea nigra</name>
    <name type="common">Usambara garter snake</name>
    <dbReference type="NCBI Taxonomy" id="66178"/>
    <lineage>
        <taxon>Eukaryota</taxon>
        <taxon>Metazoa</taxon>
        <taxon>Chordata</taxon>
        <taxon>Craniata</taxon>
        <taxon>Vertebrata</taxon>
        <taxon>Euteleostomi</taxon>
        <taxon>Lepidosauria</taxon>
        <taxon>Squamata</taxon>
        <taxon>Bifurcata</taxon>
        <taxon>Unidentata</taxon>
        <taxon>Episquamata</taxon>
        <taxon>Toxicofera</taxon>
        <taxon>Serpentes</taxon>
        <taxon>Colubroidea</taxon>
        <taxon>Elapidae</taxon>
        <taxon>Elapinae</taxon>
        <taxon>Elapsoidea</taxon>
    </lineage>
</organism>
<comment type="function">
    <text evidence="2">Component of the ubiquinol-cytochrome c reductase complex (complex III or cytochrome b-c1 complex) that is part of the mitochondrial respiratory chain. The b-c1 complex mediates electron transfer from ubiquinol to cytochrome c. Contributes to the generation of a proton gradient across the mitochondrial membrane that is then used for ATP synthesis.</text>
</comment>
<comment type="cofactor">
    <cofactor evidence="2">
        <name>heme b</name>
        <dbReference type="ChEBI" id="CHEBI:60344"/>
    </cofactor>
    <text evidence="2">Binds 2 heme b groups non-covalently.</text>
</comment>
<comment type="subunit">
    <text evidence="2">The cytochrome bc1 complex contains 3 respiratory subunits (MT-CYB, CYC1 and UQCRFS1), 2 core proteins (UQCRC1 and UQCRC2) and probably 6 low-molecular weight proteins.</text>
</comment>
<comment type="subcellular location">
    <subcellularLocation>
        <location evidence="2">Mitochondrion inner membrane</location>
        <topology evidence="2">Multi-pass membrane protein</topology>
    </subcellularLocation>
</comment>
<comment type="miscellaneous">
    <text evidence="1">Heme 1 (or BL or b562) is low-potential and absorbs at about 562 nm, and heme 2 (or BH or b566) is high-potential and absorbs at about 566 nm.</text>
</comment>
<comment type="similarity">
    <text evidence="3 4">Belongs to the cytochrome b family.</text>
</comment>
<comment type="caution">
    <text evidence="2">The full-length protein contains only eight transmembrane helices, not nine as predicted by bioinformatics tools.</text>
</comment>
<name>CYB_ELANI</name>
<protein>
    <recommendedName>
        <fullName>Cytochrome b</fullName>
    </recommendedName>
    <alternativeName>
        <fullName>Complex III subunit 3</fullName>
    </alternativeName>
    <alternativeName>
        <fullName>Complex III subunit III</fullName>
    </alternativeName>
    <alternativeName>
        <fullName>Cytochrome b-c1 complex subunit 3</fullName>
    </alternativeName>
    <alternativeName>
        <fullName>Ubiquinol-cytochrome-c reductase complex cytochrome b subunit</fullName>
    </alternativeName>
</protein>
<evidence type="ECO:0000250" key="1"/>
<evidence type="ECO:0000250" key="2">
    <source>
        <dbReference type="UniProtKB" id="P00157"/>
    </source>
</evidence>
<evidence type="ECO:0000255" key="3">
    <source>
        <dbReference type="PROSITE-ProRule" id="PRU00967"/>
    </source>
</evidence>
<evidence type="ECO:0000255" key="4">
    <source>
        <dbReference type="PROSITE-ProRule" id="PRU00968"/>
    </source>
</evidence>
<keyword id="KW-0249">Electron transport</keyword>
<keyword id="KW-0349">Heme</keyword>
<keyword id="KW-0408">Iron</keyword>
<keyword id="KW-0472">Membrane</keyword>
<keyword id="KW-0479">Metal-binding</keyword>
<keyword id="KW-0496">Mitochondrion</keyword>
<keyword id="KW-0999">Mitochondrion inner membrane</keyword>
<keyword id="KW-0679">Respiratory chain</keyword>
<keyword id="KW-0812">Transmembrane</keyword>
<keyword id="KW-1133">Transmembrane helix</keyword>
<keyword id="KW-0813">Transport</keyword>
<keyword id="KW-0830">Ubiquinone</keyword>
<accession>Q9MLK8</accession>
<gene>
    <name type="primary">MT-CYB</name>
    <name type="synonym">COB</name>
    <name type="synonym">CYTB</name>
    <name type="synonym">MTCYB</name>
</gene>
<sequence>MSNQHTLLMTNLLPVGSNISTWWNFGSMLLTCLALQTMTGFFLAIHYTANINLAFASVIHITRDIPYGWTMQSLHAIGASLFFICIYIHIARGLYYGLYMNKEVWLSGITLLFTLMATAFFGYVLPWGQMSFWAATVITNLLTAIPYLGTMLTTWLWGGFSINDPTLTRFFALHFILPFIIISLSSAHIMLLHTEGSNNPLGTNSDIDKIPFHPYHSNKDMLTATIMITMLFITLSFLPNLLNDPENFSKANPMITPQHIKPEWYFLFAYGILRSIPNKLGGTLALLTSVMILATTPFTHTSHIRSMTFRPMTQTLFWILIATLITITWTATKPVEPPFMFISQMASMIYFSFFFMNPLLGWTENKIMMNN</sequence>
<geneLocation type="mitochondrion"/>
<reference key="1">
    <citation type="journal article" date="2000" name="Mol. Phylogenet. Evol.">
        <title>Phylogenetic relationships of elapid snakes based on cytochrome b mtDNA sequences.</title>
        <authorList>
            <person name="Slowinski J.B."/>
            <person name="Keogh J.S."/>
        </authorList>
    </citation>
    <scope>NUCLEOTIDE SEQUENCE [GENOMIC DNA]</scope>
</reference>
<feature type="chain" id="PRO_0000060907" description="Cytochrome b">
    <location>
        <begin position="1"/>
        <end position="371"/>
    </location>
</feature>
<feature type="transmembrane region" description="Helical" evidence="2">
    <location>
        <begin position="25"/>
        <end position="45"/>
    </location>
</feature>
<feature type="transmembrane region" description="Helical" evidence="2">
    <location>
        <begin position="69"/>
        <end position="90"/>
    </location>
</feature>
<feature type="transmembrane region" description="Helical" evidence="2">
    <location>
        <begin position="105"/>
        <end position="125"/>
    </location>
</feature>
<feature type="transmembrane region" description="Helical" evidence="2">
    <location>
        <begin position="170"/>
        <end position="190"/>
    </location>
</feature>
<feature type="transmembrane region" description="Helical" evidence="2">
    <location>
        <begin position="218"/>
        <end position="238"/>
    </location>
</feature>
<feature type="transmembrane region" description="Helical" evidence="2">
    <location>
        <begin position="280"/>
        <end position="300"/>
    </location>
</feature>
<feature type="transmembrane region" description="Helical" evidence="2">
    <location>
        <begin position="312"/>
        <end position="332"/>
    </location>
</feature>
<feature type="transmembrane region" description="Helical" evidence="2">
    <location>
        <begin position="339"/>
        <end position="358"/>
    </location>
</feature>
<feature type="binding site" description="axial binding residue" evidence="2">
    <location>
        <position position="75"/>
    </location>
    <ligand>
        <name>heme b</name>
        <dbReference type="ChEBI" id="CHEBI:60344"/>
        <label>b562</label>
    </ligand>
    <ligandPart>
        <name>Fe</name>
        <dbReference type="ChEBI" id="CHEBI:18248"/>
    </ligandPart>
</feature>
<feature type="binding site" description="axial binding residue" evidence="2">
    <location>
        <position position="89"/>
    </location>
    <ligand>
        <name>heme b</name>
        <dbReference type="ChEBI" id="CHEBI:60344"/>
        <label>b566</label>
    </ligand>
    <ligandPart>
        <name>Fe</name>
        <dbReference type="ChEBI" id="CHEBI:18248"/>
    </ligandPart>
</feature>
<feature type="binding site" description="axial binding residue" evidence="2">
    <location>
        <position position="174"/>
    </location>
    <ligand>
        <name>heme b</name>
        <dbReference type="ChEBI" id="CHEBI:60344"/>
        <label>b562</label>
    </ligand>
    <ligandPart>
        <name>Fe</name>
        <dbReference type="ChEBI" id="CHEBI:18248"/>
    </ligandPart>
</feature>
<feature type="binding site" description="axial binding residue" evidence="2">
    <location>
        <position position="188"/>
    </location>
    <ligand>
        <name>heme b</name>
        <dbReference type="ChEBI" id="CHEBI:60344"/>
        <label>b566</label>
    </ligand>
    <ligandPart>
        <name>Fe</name>
        <dbReference type="ChEBI" id="CHEBI:18248"/>
    </ligandPart>
</feature>
<feature type="binding site" evidence="2">
    <location>
        <position position="193"/>
    </location>
    <ligand>
        <name>a ubiquinone</name>
        <dbReference type="ChEBI" id="CHEBI:16389"/>
    </ligand>
</feature>